<sequence length="321" mass="34723">MTKYALVGDVGGTNARLALCDIASGEISQAKTYSGLDYPSLEAVIRVYLEEHKVEVKDGCIAIACPITGDWVAMTNHTWAFSIAEMKKNLGFSHLEIINDFTAVSMAIPMLKKEHLIQFGGAEPVEGKPIAVYGAGTGLGVAHLVHVDKRWVSLPGEGGHVDFAPNSEEEAIILEILRAEIGHVSAERVLSGPGLVNLYRAIVKADNRLPENLKPKDITERALADSCTDCRRALSLFCVIMGRFGGNLALNLGTFGGVFIAGGIVPRFLEFFKASGFRAAFEDKGRFKEYVHDIPVYLIVHDNPGLLGSGAHLRQTLGHIL</sequence>
<organism>
    <name type="scientific">Escherichia coli O17:K52:H18 (strain UMN026 / ExPEC)</name>
    <dbReference type="NCBI Taxonomy" id="585056"/>
    <lineage>
        <taxon>Bacteria</taxon>
        <taxon>Pseudomonadati</taxon>
        <taxon>Pseudomonadota</taxon>
        <taxon>Gammaproteobacteria</taxon>
        <taxon>Enterobacterales</taxon>
        <taxon>Enterobacteriaceae</taxon>
        <taxon>Escherichia</taxon>
    </lineage>
</organism>
<name>GLK_ECOLU</name>
<keyword id="KW-0067">ATP-binding</keyword>
<keyword id="KW-0963">Cytoplasm</keyword>
<keyword id="KW-0324">Glycolysis</keyword>
<keyword id="KW-0418">Kinase</keyword>
<keyword id="KW-0547">Nucleotide-binding</keyword>
<keyword id="KW-0808">Transferase</keyword>
<evidence type="ECO:0000255" key="1">
    <source>
        <dbReference type="HAMAP-Rule" id="MF_00524"/>
    </source>
</evidence>
<feature type="chain" id="PRO_1000127704" description="Glucokinase">
    <location>
        <begin position="1"/>
        <end position="321"/>
    </location>
</feature>
<feature type="binding site" evidence="1">
    <location>
        <begin position="8"/>
        <end position="13"/>
    </location>
    <ligand>
        <name>ATP</name>
        <dbReference type="ChEBI" id="CHEBI:30616"/>
    </ligand>
</feature>
<dbReference type="EC" id="2.7.1.2" evidence="1"/>
<dbReference type="EMBL" id="CU928163">
    <property type="protein sequence ID" value="CAR13898.1"/>
    <property type="molecule type" value="Genomic_DNA"/>
</dbReference>
<dbReference type="RefSeq" id="WP_000170346.1">
    <property type="nucleotide sequence ID" value="NC_011751.1"/>
</dbReference>
<dbReference type="RefSeq" id="YP_002413425.1">
    <property type="nucleotide sequence ID" value="NC_011751.1"/>
</dbReference>
<dbReference type="SMR" id="B7N5Y9"/>
<dbReference type="STRING" id="585056.ECUMN_2718"/>
<dbReference type="GeneID" id="75202543"/>
<dbReference type="KEGG" id="eum:ECUMN_2718"/>
<dbReference type="PATRIC" id="fig|585056.7.peg.2900"/>
<dbReference type="HOGENOM" id="CLU_042582_1_0_6"/>
<dbReference type="Proteomes" id="UP000007097">
    <property type="component" value="Chromosome"/>
</dbReference>
<dbReference type="GO" id="GO:0005829">
    <property type="term" value="C:cytosol"/>
    <property type="evidence" value="ECO:0007669"/>
    <property type="project" value="TreeGrafter"/>
</dbReference>
<dbReference type="GO" id="GO:0005524">
    <property type="term" value="F:ATP binding"/>
    <property type="evidence" value="ECO:0007669"/>
    <property type="project" value="UniProtKB-UniRule"/>
</dbReference>
<dbReference type="GO" id="GO:0005536">
    <property type="term" value="F:D-glucose binding"/>
    <property type="evidence" value="ECO:0007669"/>
    <property type="project" value="InterPro"/>
</dbReference>
<dbReference type="GO" id="GO:0004340">
    <property type="term" value="F:glucokinase activity"/>
    <property type="evidence" value="ECO:0007669"/>
    <property type="project" value="UniProtKB-UniRule"/>
</dbReference>
<dbReference type="GO" id="GO:0006096">
    <property type="term" value="P:glycolytic process"/>
    <property type="evidence" value="ECO:0007669"/>
    <property type="project" value="UniProtKB-UniRule"/>
</dbReference>
<dbReference type="CDD" id="cd24008">
    <property type="entry name" value="ASKHA_NBD_GLK"/>
    <property type="match status" value="1"/>
</dbReference>
<dbReference type="FunFam" id="3.30.420.40:FF:000045">
    <property type="entry name" value="Glucokinase"/>
    <property type="match status" value="1"/>
</dbReference>
<dbReference type="FunFam" id="3.40.367.20:FF:000002">
    <property type="entry name" value="Glucokinase"/>
    <property type="match status" value="1"/>
</dbReference>
<dbReference type="Gene3D" id="3.30.420.40">
    <property type="match status" value="1"/>
</dbReference>
<dbReference type="Gene3D" id="3.40.367.20">
    <property type="match status" value="1"/>
</dbReference>
<dbReference type="HAMAP" id="MF_00524">
    <property type="entry name" value="Glucokinase"/>
    <property type="match status" value="1"/>
</dbReference>
<dbReference type="InterPro" id="IPR043129">
    <property type="entry name" value="ATPase_NBD"/>
</dbReference>
<dbReference type="InterPro" id="IPR050201">
    <property type="entry name" value="Bacterial_glucokinase"/>
</dbReference>
<dbReference type="InterPro" id="IPR003836">
    <property type="entry name" value="Glucokinase"/>
</dbReference>
<dbReference type="NCBIfam" id="TIGR00749">
    <property type="entry name" value="glk"/>
    <property type="match status" value="1"/>
</dbReference>
<dbReference type="NCBIfam" id="NF001414">
    <property type="entry name" value="PRK00292.1-1"/>
    <property type="match status" value="1"/>
</dbReference>
<dbReference type="NCBIfam" id="NF001416">
    <property type="entry name" value="PRK00292.1-3"/>
    <property type="match status" value="1"/>
</dbReference>
<dbReference type="PANTHER" id="PTHR47690">
    <property type="entry name" value="GLUCOKINASE"/>
    <property type="match status" value="1"/>
</dbReference>
<dbReference type="PANTHER" id="PTHR47690:SF1">
    <property type="entry name" value="GLUCOKINASE"/>
    <property type="match status" value="1"/>
</dbReference>
<dbReference type="Pfam" id="PF02685">
    <property type="entry name" value="Glucokinase"/>
    <property type="match status" value="1"/>
</dbReference>
<dbReference type="SUPFAM" id="SSF53067">
    <property type="entry name" value="Actin-like ATPase domain"/>
    <property type="match status" value="1"/>
</dbReference>
<comment type="catalytic activity">
    <reaction evidence="1">
        <text>D-glucose + ATP = D-glucose 6-phosphate + ADP + H(+)</text>
        <dbReference type="Rhea" id="RHEA:17825"/>
        <dbReference type="ChEBI" id="CHEBI:4167"/>
        <dbReference type="ChEBI" id="CHEBI:15378"/>
        <dbReference type="ChEBI" id="CHEBI:30616"/>
        <dbReference type="ChEBI" id="CHEBI:61548"/>
        <dbReference type="ChEBI" id="CHEBI:456216"/>
        <dbReference type="EC" id="2.7.1.2"/>
    </reaction>
</comment>
<comment type="subcellular location">
    <subcellularLocation>
        <location evidence="1">Cytoplasm</location>
    </subcellularLocation>
</comment>
<comment type="similarity">
    <text evidence="1">Belongs to the bacterial glucokinase family.</text>
</comment>
<accession>B7N5Y9</accession>
<gene>
    <name evidence="1" type="primary">glk</name>
    <name type="ordered locus">ECUMN_2718</name>
</gene>
<proteinExistence type="inferred from homology"/>
<protein>
    <recommendedName>
        <fullName evidence="1">Glucokinase</fullName>
        <ecNumber evidence="1">2.7.1.2</ecNumber>
    </recommendedName>
    <alternativeName>
        <fullName evidence="1">Glucose kinase</fullName>
    </alternativeName>
</protein>
<reference key="1">
    <citation type="journal article" date="2009" name="PLoS Genet.">
        <title>Organised genome dynamics in the Escherichia coli species results in highly diverse adaptive paths.</title>
        <authorList>
            <person name="Touchon M."/>
            <person name="Hoede C."/>
            <person name="Tenaillon O."/>
            <person name="Barbe V."/>
            <person name="Baeriswyl S."/>
            <person name="Bidet P."/>
            <person name="Bingen E."/>
            <person name="Bonacorsi S."/>
            <person name="Bouchier C."/>
            <person name="Bouvet O."/>
            <person name="Calteau A."/>
            <person name="Chiapello H."/>
            <person name="Clermont O."/>
            <person name="Cruveiller S."/>
            <person name="Danchin A."/>
            <person name="Diard M."/>
            <person name="Dossat C."/>
            <person name="Karoui M.E."/>
            <person name="Frapy E."/>
            <person name="Garry L."/>
            <person name="Ghigo J.M."/>
            <person name="Gilles A.M."/>
            <person name="Johnson J."/>
            <person name="Le Bouguenec C."/>
            <person name="Lescat M."/>
            <person name="Mangenot S."/>
            <person name="Martinez-Jehanne V."/>
            <person name="Matic I."/>
            <person name="Nassif X."/>
            <person name="Oztas S."/>
            <person name="Petit M.A."/>
            <person name="Pichon C."/>
            <person name="Rouy Z."/>
            <person name="Ruf C.S."/>
            <person name="Schneider D."/>
            <person name="Tourret J."/>
            <person name="Vacherie B."/>
            <person name="Vallenet D."/>
            <person name="Medigue C."/>
            <person name="Rocha E.P.C."/>
            <person name="Denamur E."/>
        </authorList>
    </citation>
    <scope>NUCLEOTIDE SEQUENCE [LARGE SCALE GENOMIC DNA]</scope>
    <source>
        <strain>UMN026 / ExPEC</strain>
    </source>
</reference>